<proteinExistence type="inferred from homology"/>
<reference key="1">
    <citation type="journal article" date="2013" name="Stand. Genomic Sci.">
        <title>Complete genome sequence of Arthrobacter sp. strain FB24.</title>
        <authorList>
            <person name="Nakatsu C.H."/>
            <person name="Barabote R."/>
            <person name="Thompson S."/>
            <person name="Bruce D."/>
            <person name="Detter C."/>
            <person name="Brettin T."/>
            <person name="Han C."/>
            <person name="Beasley F."/>
            <person name="Chen W."/>
            <person name="Konopka A."/>
            <person name="Xie G."/>
        </authorList>
    </citation>
    <scope>NUCLEOTIDE SEQUENCE [LARGE SCALE GENOMIC DNA]</scope>
    <source>
        <strain>FB24</strain>
    </source>
</reference>
<comment type="function">
    <text evidence="1">Protein S19 forms a complex with S13 that binds strongly to the 16S ribosomal RNA.</text>
</comment>
<comment type="similarity">
    <text evidence="1">Belongs to the universal ribosomal protein uS19 family.</text>
</comment>
<keyword id="KW-1185">Reference proteome</keyword>
<keyword id="KW-0687">Ribonucleoprotein</keyword>
<keyword id="KW-0689">Ribosomal protein</keyword>
<keyword id="KW-0694">RNA-binding</keyword>
<keyword id="KW-0699">rRNA-binding</keyword>
<dbReference type="EMBL" id="CP000454">
    <property type="protein sequence ID" value="ABK04350.1"/>
    <property type="molecule type" value="Genomic_DNA"/>
</dbReference>
<dbReference type="RefSeq" id="WP_011692805.1">
    <property type="nucleotide sequence ID" value="NC_008541.1"/>
</dbReference>
<dbReference type="SMR" id="A0JZ80"/>
<dbReference type="STRING" id="290399.Arth_2971"/>
<dbReference type="KEGG" id="art:Arth_2971"/>
<dbReference type="eggNOG" id="COG0185">
    <property type="taxonomic scope" value="Bacteria"/>
</dbReference>
<dbReference type="HOGENOM" id="CLU_144911_0_1_11"/>
<dbReference type="OrthoDB" id="9797833at2"/>
<dbReference type="Proteomes" id="UP000000754">
    <property type="component" value="Chromosome"/>
</dbReference>
<dbReference type="GO" id="GO:0005737">
    <property type="term" value="C:cytoplasm"/>
    <property type="evidence" value="ECO:0007669"/>
    <property type="project" value="UniProtKB-ARBA"/>
</dbReference>
<dbReference type="GO" id="GO:0015935">
    <property type="term" value="C:small ribosomal subunit"/>
    <property type="evidence" value="ECO:0007669"/>
    <property type="project" value="InterPro"/>
</dbReference>
<dbReference type="GO" id="GO:0019843">
    <property type="term" value="F:rRNA binding"/>
    <property type="evidence" value="ECO:0007669"/>
    <property type="project" value="UniProtKB-UniRule"/>
</dbReference>
<dbReference type="GO" id="GO:0003735">
    <property type="term" value="F:structural constituent of ribosome"/>
    <property type="evidence" value="ECO:0007669"/>
    <property type="project" value="InterPro"/>
</dbReference>
<dbReference type="GO" id="GO:0000028">
    <property type="term" value="P:ribosomal small subunit assembly"/>
    <property type="evidence" value="ECO:0007669"/>
    <property type="project" value="TreeGrafter"/>
</dbReference>
<dbReference type="GO" id="GO:0006412">
    <property type="term" value="P:translation"/>
    <property type="evidence" value="ECO:0007669"/>
    <property type="project" value="UniProtKB-UniRule"/>
</dbReference>
<dbReference type="FunFam" id="3.30.860.10:FF:000001">
    <property type="entry name" value="30S ribosomal protein S19"/>
    <property type="match status" value="1"/>
</dbReference>
<dbReference type="Gene3D" id="3.30.860.10">
    <property type="entry name" value="30s Ribosomal Protein S19, Chain A"/>
    <property type="match status" value="1"/>
</dbReference>
<dbReference type="HAMAP" id="MF_00531">
    <property type="entry name" value="Ribosomal_uS19"/>
    <property type="match status" value="1"/>
</dbReference>
<dbReference type="InterPro" id="IPR002222">
    <property type="entry name" value="Ribosomal_uS19"/>
</dbReference>
<dbReference type="InterPro" id="IPR005732">
    <property type="entry name" value="Ribosomal_uS19_bac-type"/>
</dbReference>
<dbReference type="InterPro" id="IPR020934">
    <property type="entry name" value="Ribosomal_uS19_CS"/>
</dbReference>
<dbReference type="InterPro" id="IPR023575">
    <property type="entry name" value="Ribosomal_uS19_SF"/>
</dbReference>
<dbReference type="NCBIfam" id="TIGR01050">
    <property type="entry name" value="rpsS_bact"/>
    <property type="match status" value="1"/>
</dbReference>
<dbReference type="PANTHER" id="PTHR11880">
    <property type="entry name" value="RIBOSOMAL PROTEIN S19P FAMILY MEMBER"/>
    <property type="match status" value="1"/>
</dbReference>
<dbReference type="PANTHER" id="PTHR11880:SF8">
    <property type="entry name" value="SMALL RIBOSOMAL SUBUNIT PROTEIN US19M"/>
    <property type="match status" value="1"/>
</dbReference>
<dbReference type="Pfam" id="PF00203">
    <property type="entry name" value="Ribosomal_S19"/>
    <property type="match status" value="1"/>
</dbReference>
<dbReference type="PIRSF" id="PIRSF002144">
    <property type="entry name" value="Ribosomal_S19"/>
    <property type="match status" value="1"/>
</dbReference>
<dbReference type="PRINTS" id="PR00975">
    <property type="entry name" value="RIBOSOMALS19"/>
</dbReference>
<dbReference type="SUPFAM" id="SSF54570">
    <property type="entry name" value="Ribosomal protein S19"/>
    <property type="match status" value="1"/>
</dbReference>
<dbReference type="PROSITE" id="PS00323">
    <property type="entry name" value="RIBOSOMAL_S19"/>
    <property type="match status" value="1"/>
</dbReference>
<organism>
    <name type="scientific">Arthrobacter sp. (strain FB24)</name>
    <dbReference type="NCBI Taxonomy" id="290399"/>
    <lineage>
        <taxon>Bacteria</taxon>
        <taxon>Bacillati</taxon>
        <taxon>Actinomycetota</taxon>
        <taxon>Actinomycetes</taxon>
        <taxon>Micrococcales</taxon>
        <taxon>Micrococcaceae</taxon>
        <taxon>Arthrobacter</taxon>
    </lineage>
</organism>
<accession>A0JZ80</accession>
<protein>
    <recommendedName>
        <fullName evidence="1">Small ribosomal subunit protein uS19</fullName>
    </recommendedName>
    <alternativeName>
        <fullName evidence="2">30S ribosomal protein S19</fullName>
    </alternativeName>
</protein>
<sequence>MPRSLKKGPFVDQHLFVKVDRENEKGTKNVIKTWSRRSMIIPDMLGHTIAVHDGRKHIPVFVTESMVGHKLGEFAPTRTFRGHVKDDRKGKRR</sequence>
<evidence type="ECO:0000255" key="1">
    <source>
        <dbReference type="HAMAP-Rule" id="MF_00531"/>
    </source>
</evidence>
<evidence type="ECO:0000305" key="2"/>
<gene>
    <name evidence="1" type="primary">rpsS</name>
    <name type="ordered locus">Arth_2971</name>
</gene>
<name>RS19_ARTS2</name>
<feature type="chain" id="PRO_1000051010" description="Small ribosomal subunit protein uS19">
    <location>
        <begin position="1"/>
        <end position="93"/>
    </location>
</feature>